<dbReference type="EC" id="6.3.5.-" evidence="1"/>
<dbReference type="EMBL" id="CP000425">
    <property type="protein sequence ID" value="ABJ71788.1"/>
    <property type="molecule type" value="Genomic_DNA"/>
</dbReference>
<dbReference type="RefSeq" id="WP_011675221.1">
    <property type="nucleotide sequence ID" value="NC_008527.1"/>
</dbReference>
<dbReference type="SMR" id="Q032T4"/>
<dbReference type="GeneID" id="61108478"/>
<dbReference type="KEGG" id="llc:LACR_0169"/>
<dbReference type="HOGENOM" id="CLU_105899_1_2_9"/>
<dbReference type="Proteomes" id="UP000000240">
    <property type="component" value="Chromosome"/>
</dbReference>
<dbReference type="GO" id="GO:0050566">
    <property type="term" value="F:asparaginyl-tRNA synthase (glutamine-hydrolyzing) activity"/>
    <property type="evidence" value="ECO:0007669"/>
    <property type="project" value="RHEA"/>
</dbReference>
<dbReference type="GO" id="GO:0005524">
    <property type="term" value="F:ATP binding"/>
    <property type="evidence" value="ECO:0007669"/>
    <property type="project" value="UniProtKB-KW"/>
</dbReference>
<dbReference type="GO" id="GO:0050567">
    <property type="term" value="F:glutaminyl-tRNA synthase (glutamine-hydrolyzing) activity"/>
    <property type="evidence" value="ECO:0007669"/>
    <property type="project" value="UniProtKB-UniRule"/>
</dbReference>
<dbReference type="GO" id="GO:0070681">
    <property type="term" value="P:glutaminyl-tRNAGln biosynthesis via transamidation"/>
    <property type="evidence" value="ECO:0007669"/>
    <property type="project" value="TreeGrafter"/>
</dbReference>
<dbReference type="GO" id="GO:0006450">
    <property type="term" value="P:regulation of translational fidelity"/>
    <property type="evidence" value="ECO:0007669"/>
    <property type="project" value="InterPro"/>
</dbReference>
<dbReference type="GO" id="GO:0006412">
    <property type="term" value="P:translation"/>
    <property type="evidence" value="ECO:0007669"/>
    <property type="project" value="UniProtKB-UniRule"/>
</dbReference>
<dbReference type="Gene3D" id="1.10.20.60">
    <property type="entry name" value="Glu-tRNAGln amidotransferase C subunit, N-terminal domain"/>
    <property type="match status" value="1"/>
</dbReference>
<dbReference type="HAMAP" id="MF_00122">
    <property type="entry name" value="GatC"/>
    <property type="match status" value="1"/>
</dbReference>
<dbReference type="InterPro" id="IPR036113">
    <property type="entry name" value="Asp/Glu-ADT_sf_sub_c"/>
</dbReference>
<dbReference type="InterPro" id="IPR003837">
    <property type="entry name" value="GatC"/>
</dbReference>
<dbReference type="NCBIfam" id="TIGR00135">
    <property type="entry name" value="gatC"/>
    <property type="match status" value="1"/>
</dbReference>
<dbReference type="PANTHER" id="PTHR15004">
    <property type="entry name" value="GLUTAMYL-TRNA(GLN) AMIDOTRANSFERASE SUBUNIT C, MITOCHONDRIAL"/>
    <property type="match status" value="1"/>
</dbReference>
<dbReference type="PANTHER" id="PTHR15004:SF0">
    <property type="entry name" value="GLUTAMYL-TRNA(GLN) AMIDOTRANSFERASE SUBUNIT C, MITOCHONDRIAL"/>
    <property type="match status" value="1"/>
</dbReference>
<dbReference type="Pfam" id="PF02686">
    <property type="entry name" value="GatC"/>
    <property type="match status" value="1"/>
</dbReference>
<dbReference type="SUPFAM" id="SSF141000">
    <property type="entry name" value="Glu-tRNAGln amidotransferase C subunit"/>
    <property type="match status" value="1"/>
</dbReference>
<name>GATC_LACLS</name>
<proteinExistence type="inferred from homology"/>
<gene>
    <name evidence="1" type="primary">gatC</name>
    <name type="ordered locus">LACR_0169</name>
</gene>
<reference key="1">
    <citation type="journal article" date="2006" name="Proc. Natl. Acad. Sci. U.S.A.">
        <title>Comparative genomics of the lactic acid bacteria.</title>
        <authorList>
            <person name="Makarova K.S."/>
            <person name="Slesarev A."/>
            <person name="Wolf Y.I."/>
            <person name="Sorokin A."/>
            <person name="Mirkin B."/>
            <person name="Koonin E.V."/>
            <person name="Pavlov A."/>
            <person name="Pavlova N."/>
            <person name="Karamychev V."/>
            <person name="Polouchine N."/>
            <person name="Shakhova V."/>
            <person name="Grigoriev I."/>
            <person name="Lou Y."/>
            <person name="Rohksar D."/>
            <person name="Lucas S."/>
            <person name="Huang K."/>
            <person name="Goodstein D.M."/>
            <person name="Hawkins T."/>
            <person name="Plengvidhya V."/>
            <person name="Welker D."/>
            <person name="Hughes J."/>
            <person name="Goh Y."/>
            <person name="Benson A."/>
            <person name="Baldwin K."/>
            <person name="Lee J.-H."/>
            <person name="Diaz-Muniz I."/>
            <person name="Dosti B."/>
            <person name="Smeianov V."/>
            <person name="Wechter W."/>
            <person name="Barabote R."/>
            <person name="Lorca G."/>
            <person name="Altermann E."/>
            <person name="Barrangou R."/>
            <person name="Ganesan B."/>
            <person name="Xie Y."/>
            <person name="Rawsthorne H."/>
            <person name="Tamir D."/>
            <person name="Parker C."/>
            <person name="Breidt F."/>
            <person name="Broadbent J.R."/>
            <person name="Hutkins R."/>
            <person name="O'Sullivan D."/>
            <person name="Steele J."/>
            <person name="Unlu G."/>
            <person name="Saier M.H. Jr."/>
            <person name="Klaenhammer T."/>
            <person name="Richardson P."/>
            <person name="Kozyavkin S."/>
            <person name="Weimer B.C."/>
            <person name="Mills D.A."/>
        </authorList>
    </citation>
    <scope>NUCLEOTIDE SEQUENCE [LARGE SCALE GENOMIC DNA]</scope>
    <source>
        <strain>SK11</strain>
    </source>
</reference>
<keyword id="KW-0067">ATP-binding</keyword>
<keyword id="KW-0436">Ligase</keyword>
<keyword id="KW-0547">Nucleotide-binding</keyword>
<keyword id="KW-0648">Protein biosynthesis</keyword>
<feature type="chain" id="PRO_1000016136" description="Aspartyl/glutamyl-tRNA(Asn/Gln) amidotransferase subunit C">
    <location>
        <begin position="1"/>
        <end position="101"/>
    </location>
</feature>
<protein>
    <recommendedName>
        <fullName evidence="1">Aspartyl/glutamyl-tRNA(Asn/Gln) amidotransferase subunit C</fullName>
        <shortName evidence="1">Asp/Glu-ADT subunit C</shortName>
        <ecNumber evidence="1">6.3.5.-</ecNumber>
    </recommendedName>
</protein>
<sequence>MSQITEEQVKHVALLSKLEFSENEVKSFTDTFGKIIDMVEMLDEVDTDGVPFTMNVADNLNFMREDVAEKGLDREKLMAAVPEKEDGFIKVPAMLSDGGDA</sequence>
<accession>Q032T4</accession>
<comment type="function">
    <text evidence="1">Allows the formation of correctly charged Asn-tRNA(Asn) or Gln-tRNA(Gln) through the transamidation of misacylated Asp-tRNA(Asn) or Glu-tRNA(Gln) in organisms which lack either or both of asparaginyl-tRNA or glutaminyl-tRNA synthetases. The reaction takes place in the presence of glutamine and ATP through an activated phospho-Asp-tRNA(Asn) or phospho-Glu-tRNA(Gln).</text>
</comment>
<comment type="catalytic activity">
    <reaction evidence="1">
        <text>L-glutamyl-tRNA(Gln) + L-glutamine + ATP + H2O = L-glutaminyl-tRNA(Gln) + L-glutamate + ADP + phosphate + H(+)</text>
        <dbReference type="Rhea" id="RHEA:17521"/>
        <dbReference type="Rhea" id="RHEA-COMP:9681"/>
        <dbReference type="Rhea" id="RHEA-COMP:9684"/>
        <dbReference type="ChEBI" id="CHEBI:15377"/>
        <dbReference type="ChEBI" id="CHEBI:15378"/>
        <dbReference type="ChEBI" id="CHEBI:29985"/>
        <dbReference type="ChEBI" id="CHEBI:30616"/>
        <dbReference type="ChEBI" id="CHEBI:43474"/>
        <dbReference type="ChEBI" id="CHEBI:58359"/>
        <dbReference type="ChEBI" id="CHEBI:78520"/>
        <dbReference type="ChEBI" id="CHEBI:78521"/>
        <dbReference type="ChEBI" id="CHEBI:456216"/>
    </reaction>
</comment>
<comment type="catalytic activity">
    <reaction evidence="1">
        <text>L-aspartyl-tRNA(Asn) + L-glutamine + ATP + H2O = L-asparaginyl-tRNA(Asn) + L-glutamate + ADP + phosphate + 2 H(+)</text>
        <dbReference type="Rhea" id="RHEA:14513"/>
        <dbReference type="Rhea" id="RHEA-COMP:9674"/>
        <dbReference type="Rhea" id="RHEA-COMP:9677"/>
        <dbReference type="ChEBI" id="CHEBI:15377"/>
        <dbReference type="ChEBI" id="CHEBI:15378"/>
        <dbReference type="ChEBI" id="CHEBI:29985"/>
        <dbReference type="ChEBI" id="CHEBI:30616"/>
        <dbReference type="ChEBI" id="CHEBI:43474"/>
        <dbReference type="ChEBI" id="CHEBI:58359"/>
        <dbReference type="ChEBI" id="CHEBI:78515"/>
        <dbReference type="ChEBI" id="CHEBI:78516"/>
        <dbReference type="ChEBI" id="CHEBI:456216"/>
    </reaction>
</comment>
<comment type="subunit">
    <text evidence="1">Heterotrimer of A, B and C subunits.</text>
</comment>
<comment type="similarity">
    <text evidence="1">Belongs to the GatC family.</text>
</comment>
<evidence type="ECO:0000255" key="1">
    <source>
        <dbReference type="HAMAP-Rule" id="MF_00122"/>
    </source>
</evidence>
<organism>
    <name type="scientific">Lactococcus lactis subsp. cremoris (strain SK11)</name>
    <dbReference type="NCBI Taxonomy" id="272622"/>
    <lineage>
        <taxon>Bacteria</taxon>
        <taxon>Bacillati</taxon>
        <taxon>Bacillota</taxon>
        <taxon>Bacilli</taxon>
        <taxon>Lactobacillales</taxon>
        <taxon>Streptococcaceae</taxon>
        <taxon>Lactococcus</taxon>
        <taxon>Lactococcus cremoris subsp. cremoris</taxon>
    </lineage>
</organism>